<comment type="function">
    <text evidence="1">The beta subunit is responsible for the synthesis of L-tryptophan from indole and L-serine.</text>
</comment>
<comment type="catalytic activity">
    <reaction evidence="1">
        <text>(1S,2R)-1-C-(indol-3-yl)glycerol 3-phosphate + L-serine = D-glyceraldehyde 3-phosphate + L-tryptophan + H2O</text>
        <dbReference type="Rhea" id="RHEA:10532"/>
        <dbReference type="ChEBI" id="CHEBI:15377"/>
        <dbReference type="ChEBI" id="CHEBI:33384"/>
        <dbReference type="ChEBI" id="CHEBI:57912"/>
        <dbReference type="ChEBI" id="CHEBI:58866"/>
        <dbReference type="ChEBI" id="CHEBI:59776"/>
        <dbReference type="EC" id="4.2.1.20"/>
    </reaction>
</comment>
<comment type="cofactor">
    <cofactor evidence="1">
        <name>pyridoxal 5'-phosphate</name>
        <dbReference type="ChEBI" id="CHEBI:597326"/>
    </cofactor>
</comment>
<comment type="pathway">
    <text evidence="1">Amino-acid biosynthesis; L-tryptophan biosynthesis; L-tryptophan from chorismate: step 5/5.</text>
</comment>
<comment type="subunit">
    <text evidence="1">Tetramer of two alpha and two beta chains.</text>
</comment>
<comment type="similarity">
    <text evidence="1">Belongs to the TrpB family.</text>
</comment>
<comment type="sequence caution" evidence="2">
    <conflict type="erroneous initiation">
        <sequence resource="EMBL-CDS" id="AAM85613"/>
    </conflict>
</comment>
<comment type="sequence caution" evidence="2">
    <conflict type="erroneous initiation">
        <sequence resource="EMBL-CDS" id="AAS62218"/>
    </conflict>
</comment>
<accession>Q8ZEG9</accession>
<accession>Q0WEW3</accession>
<name>TRPB_YERPE</name>
<proteinExistence type="inferred from homology"/>
<organism>
    <name type="scientific">Yersinia pestis</name>
    <dbReference type="NCBI Taxonomy" id="632"/>
    <lineage>
        <taxon>Bacteria</taxon>
        <taxon>Pseudomonadati</taxon>
        <taxon>Pseudomonadota</taxon>
        <taxon>Gammaproteobacteria</taxon>
        <taxon>Enterobacterales</taxon>
        <taxon>Yersiniaceae</taxon>
        <taxon>Yersinia</taxon>
    </lineage>
</organism>
<reference key="1">
    <citation type="journal article" date="2001" name="Nature">
        <title>Genome sequence of Yersinia pestis, the causative agent of plague.</title>
        <authorList>
            <person name="Parkhill J."/>
            <person name="Wren B.W."/>
            <person name="Thomson N.R."/>
            <person name="Titball R.W."/>
            <person name="Holden M.T.G."/>
            <person name="Prentice M.B."/>
            <person name="Sebaihia M."/>
            <person name="James K.D."/>
            <person name="Churcher C.M."/>
            <person name="Mungall K.L."/>
            <person name="Baker S."/>
            <person name="Basham D."/>
            <person name="Bentley S.D."/>
            <person name="Brooks K."/>
            <person name="Cerdeno-Tarraga A.-M."/>
            <person name="Chillingworth T."/>
            <person name="Cronin A."/>
            <person name="Davies R.M."/>
            <person name="Davis P."/>
            <person name="Dougan G."/>
            <person name="Feltwell T."/>
            <person name="Hamlin N."/>
            <person name="Holroyd S."/>
            <person name="Jagels K."/>
            <person name="Karlyshev A.V."/>
            <person name="Leather S."/>
            <person name="Moule S."/>
            <person name="Oyston P.C.F."/>
            <person name="Quail M.A."/>
            <person name="Rutherford K.M."/>
            <person name="Simmonds M."/>
            <person name="Skelton J."/>
            <person name="Stevens K."/>
            <person name="Whitehead S."/>
            <person name="Barrell B.G."/>
        </authorList>
    </citation>
    <scope>NUCLEOTIDE SEQUENCE [LARGE SCALE GENOMIC DNA]</scope>
    <source>
        <strain>CO-92 / Biovar Orientalis</strain>
    </source>
</reference>
<reference key="2">
    <citation type="journal article" date="2002" name="J. Bacteriol.">
        <title>Genome sequence of Yersinia pestis KIM.</title>
        <authorList>
            <person name="Deng W."/>
            <person name="Burland V."/>
            <person name="Plunkett G. III"/>
            <person name="Boutin A."/>
            <person name="Mayhew G.F."/>
            <person name="Liss P."/>
            <person name="Perna N.T."/>
            <person name="Rose D.J."/>
            <person name="Mau B."/>
            <person name="Zhou S."/>
            <person name="Schwartz D.C."/>
            <person name="Fetherston J.D."/>
            <person name="Lindler L.E."/>
            <person name="Brubaker R.R."/>
            <person name="Plano G.V."/>
            <person name="Straley S.C."/>
            <person name="McDonough K.A."/>
            <person name="Nilles M.L."/>
            <person name="Matson J.S."/>
            <person name="Blattner F.R."/>
            <person name="Perry R.D."/>
        </authorList>
    </citation>
    <scope>NUCLEOTIDE SEQUENCE [LARGE SCALE GENOMIC DNA]</scope>
    <source>
        <strain>KIM10+ / Biovar Mediaevalis</strain>
    </source>
</reference>
<reference key="3">
    <citation type="journal article" date="2004" name="DNA Res.">
        <title>Complete genome sequence of Yersinia pestis strain 91001, an isolate avirulent to humans.</title>
        <authorList>
            <person name="Song Y."/>
            <person name="Tong Z."/>
            <person name="Wang J."/>
            <person name="Wang L."/>
            <person name="Guo Z."/>
            <person name="Han Y."/>
            <person name="Zhang J."/>
            <person name="Pei D."/>
            <person name="Zhou D."/>
            <person name="Qin H."/>
            <person name="Pang X."/>
            <person name="Han Y."/>
            <person name="Zhai J."/>
            <person name="Li M."/>
            <person name="Cui B."/>
            <person name="Qi Z."/>
            <person name="Jin L."/>
            <person name="Dai R."/>
            <person name="Chen F."/>
            <person name="Li S."/>
            <person name="Ye C."/>
            <person name="Du Z."/>
            <person name="Lin W."/>
            <person name="Wang J."/>
            <person name="Yu J."/>
            <person name="Yang H."/>
            <person name="Wang J."/>
            <person name="Huang P."/>
            <person name="Yang R."/>
        </authorList>
    </citation>
    <scope>NUCLEOTIDE SEQUENCE [LARGE SCALE GENOMIC DNA]</scope>
    <source>
        <strain>91001 / Biovar Mediaevalis</strain>
    </source>
</reference>
<dbReference type="EC" id="4.2.1.20" evidence="1"/>
<dbReference type="EMBL" id="AL590842">
    <property type="protein sequence ID" value="CAL20833.1"/>
    <property type="molecule type" value="Genomic_DNA"/>
</dbReference>
<dbReference type="EMBL" id="AE009952">
    <property type="protein sequence ID" value="AAM85613.1"/>
    <property type="status" value="ALT_INIT"/>
    <property type="molecule type" value="Genomic_DNA"/>
</dbReference>
<dbReference type="EMBL" id="AE017042">
    <property type="protein sequence ID" value="AAS62218.1"/>
    <property type="status" value="ALT_INIT"/>
    <property type="molecule type" value="Genomic_DNA"/>
</dbReference>
<dbReference type="PIR" id="AF0268">
    <property type="entry name" value="AF0268"/>
</dbReference>
<dbReference type="RefSeq" id="WP_002210633.1">
    <property type="nucleotide sequence ID" value="NZ_WUCM01000001.1"/>
</dbReference>
<dbReference type="RefSeq" id="YP_002347175.1">
    <property type="nucleotide sequence ID" value="NC_003143.1"/>
</dbReference>
<dbReference type="SMR" id="Q8ZEG9"/>
<dbReference type="IntAct" id="Q8ZEG9">
    <property type="interactions" value="1"/>
</dbReference>
<dbReference type="STRING" id="214092.YPO2204"/>
<dbReference type="PaxDb" id="214092-YPO2204"/>
<dbReference type="EnsemblBacteria" id="AAS62218">
    <property type="protein sequence ID" value="AAS62218"/>
    <property type="gene ID" value="YP_2002"/>
</dbReference>
<dbReference type="GeneID" id="57976463"/>
<dbReference type="KEGG" id="ype:YPO2204"/>
<dbReference type="KEGG" id="ypk:y2048"/>
<dbReference type="KEGG" id="ypm:YP_2002"/>
<dbReference type="PATRIC" id="fig|214092.21.peg.2601"/>
<dbReference type="eggNOG" id="COG0133">
    <property type="taxonomic scope" value="Bacteria"/>
</dbReference>
<dbReference type="HOGENOM" id="CLU_016734_3_1_6"/>
<dbReference type="OMA" id="PLTLCQN"/>
<dbReference type="OrthoDB" id="9766131at2"/>
<dbReference type="UniPathway" id="UPA00035">
    <property type="reaction ID" value="UER00044"/>
</dbReference>
<dbReference type="Proteomes" id="UP000000815">
    <property type="component" value="Chromosome"/>
</dbReference>
<dbReference type="Proteomes" id="UP000001019">
    <property type="component" value="Chromosome"/>
</dbReference>
<dbReference type="Proteomes" id="UP000002490">
    <property type="component" value="Chromosome"/>
</dbReference>
<dbReference type="GO" id="GO:0005737">
    <property type="term" value="C:cytoplasm"/>
    <property type="evidence" value="ECO:0000318"/>
    <property type="project" value="GO_Central"/>
</dbReference>
<dbReference type="GO" id="GO:0004834">
    <property type="term" value="F:tryptophan synthase activity"/>
    <property type="evidence" value="ECO:0007669"/>
    <property type="project" value="UniProtKB-UniRule"/>
</dbReference>
<dbReference type="GO" id="GO:0000162">
    <property type="term" value="P:L-tryptophan biosynthetic process"/>
    <property type="evidence" value="ECO:0000318"/>
    <property type="project" value="GO_Central"/>
</dbReference>
<dbReference type="CDD" id="cd06446">
    <property type="entry name" value="Trp-synth_B"/>
    <property type="match status" value="1"/>
</dbReference>
<dbReference type="FunFam" id="3.40.50.1100:FF:000001">
    <property type="entry name" value="Tryptophan synthase beta chain"/>
    <property type="match status" value="1"/>
</dbReference>
<dbReference type="FunFam" id="3.40.50.1100:FF:000004">
    <property type="entry name" value="Tryptophan synthase beta chain"/>
    <property type="match status" value="1"/>
</dbReference>
<dbReference type="Gene3D" id="3.40.50.1100">
    <property type="match status" value="2"/>
</dbReference>
<dbReference type="HAMAP" id="MF_00133">
    <property type="entry name" value="Trp_synth_beta"/>
    <property type="match status" value="1"/>
</dbReference>
<dbReference type="InterPro" id="IPR006653">
    <property type="entry name" value="Trp_synth_b_CS"/>
</dbReference>
<dbReference type="InterPro" id="IPR006654">
    <property type="entry name" value="Trp_synth_beta"/>
</dbReference>
<dbReference type="InterPro" id="IPR023026">
    <property type="entry name" value="Trp_synth_beta/beta-like"/>
</dbReference>
<dbReference type="InterPro" id="IPR001926">
    <property type="entry name" value="TrpB-like_PALP"/>
</dbReference>
<dbReference type="InterPro" id="IPR036052">
    <property type="entry name" value="TrpB-like_PALP_sf"/>
</dbReference>
<dbReference type="NCBIfam" id="TIGR00263">
    <property type="entry name" value="trpB"/>
    <property type="match status" value="1"/>
</dbReference>
<dbReference type="PANTHER" id="PTHR48077:SF3">
    <property type="entry name" value="TRYPTOPHAN SYNTHASE"/>
    <property type="match status" value="1"/>
</dbReference>
<dbReference type="PANTHER" id="PTHR48077">
    <property type="entry name" value="TRYPTOPHAN SYNTHASE-RELATED"/>
    <property type="match status" value="1"/>
</dbReference>
<dbReference type="Pfam" id="PF00291">
    <property type="entry name" value="PALP"/>
    <property type="match status" value="1"/>
</dbReference>
<dbReference type="PIRSF" id="PIRSF001413">
    <property type="entry name" value="Trp_syn_beta"/>
    <property type="match status" value="1"/>
</dbReference>
<dbReference type="SUPFAM" id="SSF53686">
    <property type="entry name" value="Tryptophan synthase beta subunit-like PLP-dependent enzymes"/>
    <property type="match status" value="1"/>
</dbReference>
<dbReference type="PROSITE" id="PS00168">
    <property type="entry name" value="TRP_SYNTHASE_BETA"/>
    <property type="match status" value="1"/>
</dbReference>
<feature type="chain" id="PRO_0000099029" description="Tryptophan synthase beta chain">
    <location>
        <begin position="1"/>
        <end position="396"/>
    </location>
</feature>
<feature type="modified residue" description="N6-(pyridoxal phosphate)lysine" evidence="1">
    <location>
        <position position="86"/>
    </location>
</feature>
<gene>
    <name evidence="1" type="primary">trpB</name>
    <name type="ordered locus">YPO2204</name>
    <name type="ordered locus">y2048</name>
    <name type="ordered locus">YP_2002</name>
</gene>
<keyword id="KW-0028">Amino-acid biosynthesis</keyword>
<keyword id="KW-0057">Aromatic amino acid biosynthesis</keyword>
<keyword id="KW-0456">Lyase</keyword>
<keyword id="KW-0663">Pyridoxal phosphate</keyword>
<keyword id="KW-1185">Reference proteome</keyword>
<keyword id="KW-0822">Tryptophan biosynthesis</keyword>
<sequence>MTTLNPYFGEFGGMYVPQILVPALKQLEDAFVSAQLDPEFQAAFQDLLKNYAGRPTALTLCQNLTKGTKTKLYLKREDLLHGGAHKTNQVLGQALLAKRMGKTEIIAETGAGQHGVASALACALLGLKCRIYMGAKDIERQSPNVFRMRLMGAEVIPVHSGSSTLKDACNEALRDWSGTYETAHYMLGTAAGPHPYPTIVREFQRMIGEETKAQILEKEGRLPDAVLACVGGGSNAIGMFADFIDEPDVGLIGVEPAGLGIETGQHGAPLKHGKVGIYFGMKSPMMQTSDGQIEESYSISAGLDFPSVGPQHAYLNSIGRADYVSITDDEALDAFKTLSCKEGIIPALESSHALAHALKMIKADPDKEQILVVNLSGRGDKDIFTVHDILKARGEI</sequence>
<evidence type="ECO:0000255" key="1">
    <source>
        <dbReference type="HAMAP-Rule" id="MF_00133"/>
    </source>
</evidence>
<evidence type="ECO:0000305" key="2"/>
<protein>
    <recommendedName>
        <fullName evidence="1">Tryptophan synthase beta chain</fullName>
        <ecNumber evidence="1">4.2.1.20</ecNumber>
    </recommendedName>
</protein>